<feature type="chain" id="PRO_0000175135" description="Ferrochelatase">
    <location>
        <begin position="1"/>
        <end position="354"/>
    </location>
</feature>
<feature type="binding site" evidence="1">
    <location>
        <position position="204"/>
    </location>
    <ligand>
        <name>Fe cation</name>
        <dbReference type="ChEBI" id="CHEBI:24875"/>
    </ligand>
</feature>
<feature type="binding site" evidence="1">
    <location>
        <position position="306"/>
    </location>
    <ligand>
        <name>Fe cation</name>
        <dbReference type="ChEBI" id="CHEBI:24875"/>
    </ligand>
</feature>
<accession>Q83FA4</accession>
<dbReference type="EC" id="4.98.1.1" evidence="1"/>
<dbReference type="EMBL" id="AE016828">
    <property type="protein sequence ID" value="AAO89611.2"/>
    <property type="molecule type" value="Genomic_DNA"/>
</dbReference>
<dbReference type="RefSeq" id="NP_819097.2">
    <property type="nucleotide sequence ID" value="NC_002971.4"/>
</dbReference>
<dbReference type="RefSeq" id="WP_010957341.1">
    <property type="nucleotide sequence ID" value="NC_002971.4"/>
</dbReference>
<dbReference type="SMR" id="Q83FA4"/>
<dbReference type="STRING" id="227377.CBU_0042"/>
<dbReference type="EnsemblBacteria" id="AAO89611">
    <property type="protein sequence ID" value="AAO89611"/>
    <property type="gene ID" value="CBU_0042"/>
</dbReference>
<dbReference type="GeneID" id="1207904"/>
<dbReference type="KEGG" id="cbu:CBU_0042"/>
<dbReference type="PATRIC" id="fig|227377.7.peg.43"/>
<dbReference type="eggNOG" id="COG0276">
    <property type="taxonomic scope" value="Bacteria"/>
</dbReference>
<dbReference type="HOGENOM" id="CLU_018884_0_1_6"/>
<dbReference type="OrthoDB" id="9809741at2"/>
<dbReference type="UniPathway" id="UPA00252">
    <property type="reaction ID" value="UER00325"/>
</dbReference>
<dbReference type="Proteomes" id="UP000002671">
    <property type="component" value="Chromosome"/>
</dbReference>
<dbReference type="GO" id="GO:0005737">
    <property type="term" value="C:cytoplasm"/>
    <property type="evidence" value="ECO:0007669"/>
    <property type="project" value="UniProtKB-SubCell"/>
</dbReference>
<dbReference type="GO" id="GO:0004325">
    <property type="term" value="F:ferrochelatase activity"/>
    <property type="evidence" value="ECO:0000318"/>
    <property type="project" value="GO_Central"/>
</dbReference>
<dbReference type="GO" id="GO:0046872">
    <property type="term" value="F:metal ion binding"/>
    <property type="evidence" value="ECO:0007669"/>
    <property type="project" value="UniProtKB-KW"/>
</dbReference>
<dbReference type="GO" id="GO:0006783">
    <property type="term" value="P:heme biosynthetic process"/>
    <property type="evidence" value="ECO:0000318"/>
    <property type="project" value="GO_Central"/>
</dbReference>
<dbReference type="CDD" id="cd00419">
    <property type="entry name" value="Ferrochelatase_C"/>
    <property type="match status" value="1"/>
</dbReference>
<dbReference type="CDD" id="cd03411">
    <property type="entry name" value="Ferrochelatase_N"/>
    <property type="match status" value="1"/>
</dbReference>
<dbReference type="Gene3D" id="3.40.50.1400">
    <property type="match status" value="2"/>
</dbReference>
<dbReference type="HAMAP" id="MF_00323">
    <property type="entry name" value="Ferrochelatase"/>
    <property type="match status" value="1"/>
</dbReference>
<dbReference type="InterPro" id="IPR001015">
    <property type="entry name" value="Ferrochelatase"/>
</dbReference>
<dbReference type="InterPro" id="IPR019772">
    <property type="entry name" value="Ferrochelatase_AS"/>
</dbReference>
<dbReference type="InterPro" id="IPR033644">
    <property type="entry name" value="Ferrochelatase_C"/>
</dbReference>
<dbReference type="InterPro" id="IPR033659">
    <property type="entry name" value="Ferrochelatase_N"/>
</dbReference>
<dbReference type="NCBIfam" id="TIGR00109">
    <property type="entry name" value="hemH"/>
    <property type="match status" value="1"/>
</dbReference>
<dbReference type="PANTHER" id="PTHR11108">
    <property type="entry name" value="FERROCHELATASE"/>
    <property type="match status" value="1"/>
</dbReference>
<dbReference type="PANTHER" id="PTHR11108:SF1">
    <property type="entry name" value="FERROCHELATASE, MITOCHONDRIAL"/>
    <property type="match status" value="1"/>
</dbReference>
<dbReference type="Pfam" id="PF00762">
    <property type="entry name" value="Ferrochelatase"/>
    <property type="match status" value="1"/>
</dbReference>
<dbReference type="SUPFAM" id="SSF53800">
    <property type="entry name" value="Chelatase"/>
    <property type="match status" value="1"/>
</dbReference>
<dbReference type="PROSITE" id="PS00534">
    <property type="entry name" value="FERROCHELATASE"/>
    <property type="match status" value="1"/>
</dbReference>
<protein>
    <recommendedName>
        <fullName evidence="1">Ferrochelatase</fullName>
        <ecNumber evidence="1">4.98.1.1</ecNumber>
    </recommendedName>
    <alternativeName>
        <fullName evidence="1">Heme synthase</fullName>
    </alternativeName>
    <alternativeName>
        <fullName evidence="1">Protoheme ferro-lyase</fullName>
    </alternativeName>
</protein>
<name>HEMH_COXBU</name>
<keyword id="KW-0963">Cytoplasm</keyword>
<keyword id="KW-0350">Heme biosynthesis</keyword>
<keyword id="KW-0408">Iron</keyword>
<keyword id="KW-0456">Lyase</keyword>
<keyword id="KW-0479">Metal-binding</keyword>
<keyword id="KW-0627">Porphyrin biosynthesis</keyword>
<keyword id="KW-1185">Reference proteome</keyword>
<reference key="1">
    <citation type="journal article" date="2003" name="Proc. Natl. Acad. Sci. U.S.A.">
        <title>Complete genome sequence of the Q-fever pathogen, Coxiella burnetii.</title>
        <authorList>
            <person name="Seshadri R."/>
            <person name="Paulsen I.T."/>
            <person name="Eisen J.A."/>
            <person name="Read T.D."/>
            <person name="Nelson K.E."/>
            <person name="Nelson W.C."/>
            <person name="Ward N.L."/>
            <person name="Tettelin H."/>
            <person name="Davidsen T.M."/>
            <person name="Beanan M.J."/>
            <person name="DeBoy R.T."/>
            <person name="Daugherty S.C."/>
            <person name="Brinkac L.M."/>
            <person name="Madupu R."/>
            <person name="Dodson R.J."/>
            <person name="Khouri H.M."/>
            <person name="Lee K.H."/>
            <person name="Carty H.A."/>
            <person name="Scanlan D."/>
            <person name="Heinzen R.A."/>
            <person name="Thompson H.A."/>
            <person name="Samuel J.E."/>
            <person name="Fraser C.M."/>
            <person name="Heidelberg J.F."/>
        </authorList>
    </citation>
    <scope>NUCLEOTIDE SEQUENCE [LARGE SCALE GENOMIC DNA]</scope>
    <source>
        <strain>RSA 493 / Nine Mile phase I</strain>
    </source>
</reference>
<proteinExistence type="inferred from homology"/>
<sequence>MAKQAIKRAKILAVKNNNKIGVLLINLGTPDEPSVPAVRRYLRQFLSDPKVIDVPSLVRWIIVHLCILPFRPKRSAKLYQKIWMPEGSPLLVYSEMLRERVGETLGDDFCVALGMRYGKPSIETALKKLQEAQCRQLIVLPLFPQYSTSTTASALEEVRAKNSFKEMTVIDRFFEEPHYIDSMTTLIHENLNEFQPDYFLFSYHGLPERHLVKSGCQLAICNRKNNCSPISSSNENCYRAQCFETSRLIAKKLNLTDQQYGVAFQSRLGRAKWIEPYTDKYLIELSKKGIKKLMVVCPSFPVDCLETLEEIGIRAQSQWQRLDGETLKLIPSLNAHPQWVNAIAKMAKKSLQLF</sequence>
<organism>
    <name type="scientific">Coxiella burnetii (strain RSA 493 / Nine Mile phase I)</name>
    <dbReference type="NCBI Taxonomy" id="227377"/>
    <lineage>
        <taxon>Bacteria</taxon>
        <taxon>Pseudomonadati</taxon>
        <taxon>Pseudomonadota</taxon>
        <taxon>Gammaproteobacteria</taxon>
        <taxon>Legionellales</taxon>
        <taxon>Coxiellaceae</taxon>
        <taxon>Coxiella</taxon>
    </lineage>
</organism>
<evidence type="ECO:0000255" key="1">
    <source>
        <dbReference type="HAMAP-Rule" id="MF_00323"/>
    </source>
</evidence>
<comment type="function">
    <text evidence="1">Catalyzes the ferrous insertion into protoporphyrin IX.</text>
</comment>
<comment type="catalytic activity">
    <reaction evidence="1">
        <text>heme b + 2 H(+) = protoporphyrin IX + Fe(2+)</text>
        <dbReference type="Rhea" id="RHEA:22584"/>
        <dbReference type="ChEBI" id="CHEBI:15378"/>
        <dbReference type="ChEBI" id="CHEBI:29033"/>
        <dbReference type="ChEBI" id="CHEBI:57306"/>
        <dbReference type="ChEBI" id="CHEBI:60344"/>
        <dbReference type="EC" id="4.98.1.1"/>
    </reaction>
</comment>
<comment type="pathway">
    <text evidence="1">Porphyrin-containing compound metabolism; protoheme biosynthesis; protoheme from protoporphyrin-IX: step 1/1.</text>
</comment>
<comment type="subcellular location">
    <subcellularLocation>
        <location evidence="1">Cytoplasm</location>
    </subcellularLocation>
</comment>
<comment type="similarity">
    <text evidence="1">Belongs to the ferrochelatase family.</text>
</comment>
<gene>
    <name evidence="1" type="primary">hemH</name>
    <name type="ordered locus">CBU_0042</name>
</gene>